<organism>
    <name type="scientific">Dictyostelium discoideum</name>
    <name type="common">Social amoeba</name>
    <dbReference type="NCBI Taxonomy" id="44689"/>
    <lineage>
        <taxon>Eukaryota</taxon>
        <taxon>Amoebozoa</taxon>
        <taxon>Evosea</taxon>
        <taxon>Eumycetozoa</taxon>
        <taxon>Dictyostelia</taxon>
        <taxon>Dictyosteliales</taxon>
        <taxon>Dictyosteliaceae</taxon>
        <taxon>Dictyostelium</taxon>
    </lineage>
</organism>
<feature type="chain" id="PRO_0000346996" description="Uncharacterized protein DDB_G0288141">
    <location>
        <begin position="1"/>
        <end position="86"/>
    </location>
</feature>
<keyword id="KW-1185">Reference proteome</keyword>
<sequence length="86" mass="9864">MAWELKKGGENYIFVYVSGGYVILGSRDRTIQSSAEYCSIEDFIIKGQLQQPIVQEFGEKTFKEIYDKVARVHQQRNQKTTAPQSS</sequence>
<name>Y7797_DICDI</name>
<proteinExistence type="predicted"/>
<dbReference type="EMBL" id="AAFI02000109">
    <property type="protein sequence ID" value="EAL63358.1"/>
    <property type="molecule type" value="Genomic_DNA"/>
</dbReference>
<dbReference type="RefSeq" id="XP_636863.1">
    <property type="nucleotide sequence ID" value="XM_631771.1"/>
</dbReference>
<dbReference type="SMR" id="Q54JD0"/>
<dbReference type="FunCoup" id="Q54JD0">
    <property type="interactions" value="3"/>
</dbReference>
<dbReference type="PaxDb" id="44689-DDB0304540"/>
<dbReference type="EnsemblProtists" id="EAL63358">
    <property type="protein sequence ID" value="EAL63358"/>
    <property type="gene ID" value="DDB_G0288141"/>
</dbReference>
<dbReference type="GeneID" id="8626474"/>
<dbReference type="KEGG" id="ddi:DDB_G0288141"/>
<dbReference type="dictyBase" id="DDB_G0288141"/>
<dbReference type="VEuPathDB" id="AmoebaDB:DDB_G0288141"/>
<dbReference type="eggNOG" id="ENOG502RI21">
    <property type="taxonomic scope" value="Eukaryota"/>
</dbReference>
<dbReference type="HOGENOM" id="CLU_2502640_0_0_1"/>
<dbReference type="InParanoid" id="Q54JD0"/>
<dbReference type="OMA" id="YCSIEDF"/>
<dbReference type="PRO" id="PR:Q54JD0"/>
<dbReference type="Proteomes" id="UP000002195">
    <property type="component" value="Chromosome 5"/>
</dbReference>
<reference key="1">
    <citation type="journal article" date="2005" name="Nature">
        <title>The genome of the social amoeba Dictyostelium discoideum.</title>
        <authorList>
            <person name="Eichinger L."/>
            <person name="Pachebat J.A."/>
            <person name="Gloeckner G."/>
            <person name="Rajandream M.A."/>
            <person name="Sucgang R."/>
            <person name="Berriman M."/>
            <person name="Song J."/>
            <person name="Olsen R."/>
            <person name="Szafranski K."/>
            <person name="Xu Q."/>
            <person name="Tunggal B."/>
            <person name="Kummerfeld S."/>
            <person name="Madera M."/>
            <person name="Konfortov B.A."/>
            <person name="Rivero F."/>
            <person name="Bankier A.T."/>
            <person name="Lehmann R."/>
            <person name="Hamlin N."/>
            <person name="Davies R."/>
            <person name="Gaudet P."/>
            <person name="Fey P."/>
            <person name="Pilcher K."/>
            <person name="Chen G."/>
            <person name="Saunders D."/>
            <person name="Sodergren E.J."/>
            <person name="Davis P."/>
            <person name="Kerhornou A."/>
            <person name="Nie X."/>
            <person name="Hall N."/>
            <person name="Anjard C."/>
            <person name="Hemphill L."/>
            <person name="Bason N."/>
            <person name="Farbrother P."/>
            <person name="Desany B."/>
            <person name="Just E."/>
            <person name="Morio T."/>
            <person name="Rost R."/>
            <person name="Churcher C.M."/>
            <person name="Cooper J."/>
            <person name="Haydock S."/>
            <person name="van Driessche N."/>
            <person name="Cronin A."/>
            <person name="Goodhead I."/>
            <person name="Muzny D.M."/>
            <person name="Mourier T."/>
            <person name="Pain A."/>
            <person name="Lu M."/>
            <person name="Harper D."/>
            <person name="Lindsay R."/>
            <person name="Hauser H."/>
            <person name="James K.D."/>
            <person name="Quiles M."/>
            <person name="Madan Babu M."/>
            <person name="Saito T."/>
            <person name="Buchrieser C."/>
            <person name="Wardroper A."/>
            <person name="Felder M."/>
            <person name="Thangavelu M."/>
            <person name="Johnson D."/>
            <person name="Knights A."/>
            <person name="Loulseged H."/>
            <person name="Mungall K.L."/>
            <person name="Oliver K."/>
            <person name="Price C."/>
            <person name="Quail M.A."/>
            <person name="Urushihara H."/>
            <person name="Hernandez J."/>
            <person name="Rabbinowitsch E."/>
            <person name="Steffen D."/>
            <person name="Sanders M."/>
            <person name="Ma J."/>
            <person name="Kohara Y."/>
            <person name="Sharp S."/>
            <person name="Simmonds M.N."/>
            <person name="Spiegler S."/>
            <person name="Tivey A."/>
            <person name="Sugano S."/>
            <person name="White B."/>
            <person name="Walker D."/>
            <person name="Woodward J.R."/>
            <person name="Winckler T."/>
            <person name="Tanaka Y."/>
            <person name="Shaulsky G."/>
            <person name="Schleicher M."/>
            <person name="Weinstock G.M."/>
            <person name="Rosenthal A."/>
            <person name="Cox E.C."/>
            <person name="Chisholm R.L."/>
            <person name="Gibbs R.A."/>
            <person name="Loomis W.F."/>
            <person name="Platzer M."/>
            <person name="Kay R.R."/>
            <person name="Williams J.G."/>
            <person name="Dear P.H."/>
            <person name="Noegel A.A."/>
            <person name="Barrell B.G."/>
            <person name="Kuspa A."/>
        </authorList>
    </citation>
    <scope>NUCLEOTIDE SEQUENCE [LARGE SCALE GENOMIC DNA]</scope>
    <source>
        <strain>AX4</strain>
    </source>
</reference>
<accession>Q54JD0</accession>
<protein>
    <recommendedName>
        <fullName>Uncharacterized protein DDB_G0288141</fullName>
    </recommendedName>
</protein>
<gene>
    <name type="ORF">DDB_G0288141</name>
</gene>